<protein>
    <recommendedName>
        <fullName evidence="1">Probable GTP-binding protein EngB</fullName>
    </recommendedName>
</protein>
<reference key="1">
    <citation type="journal article" date="2005" name="Proc. Natl. Acad. Sci. U.S.A.">
        <title>The genome of the heartwater agent Ehrlichia ruminantium contains multiple tandem repeats of actively variable copy number.</title>
        <authorList>
            <person name="Collins N.E."/>
            <person name="Liebenberg J."/>
            <person name="de Villiers E.P."/>
            <person name="Brayton K.A."/>
            <person name="Louw E."/>
            <person name="Pretorius A."/>
            <person name="Faber F.E."/>
            <person name="van Heerden H."/>
            <person name="Josemans A."/>
            <person name="van Kleef M."/>
            <person name="Steyn H.C."/>
            <person name="van Strijp M.F."/>
            <person name="Zweygarth E."/>
            <person name="Jongejan F."/>
            <person name="Maillard J.C."/>
            <person name="Berthier D."/>
            <person name="Botha M."/>
            <person name="Joubert F."/>
            <person name="Corton C.H."/>
            <person name="Thomson N.R."/>
            <person name="Allsopp M.T."/>
            <person name="Allsopp B.A."/>
        </authorList>
    </citation>
    <scope>NUCLEOTIDE SEQUENCE [LARGE SCALE GENOMIC DNA]</scope>
    <source>
        <strain>Welgevonden</strain>
    </source>
</reference>
<reference key="2">
    <citation type="journal article" date="2006" name="J. Bacteriol.">
        <title>Comparative genomic analysis of three strains of Ehrlichia ruminantium reveals an active process of genome size plasticity.</title>
        <authorList>
            <person name="Frutos R."/>
            <person name="Viari A."/>
            <person name="Ferraz C."/>
            <person name="Morgat A."/>
            <person name="Eychenie S."/>
            <person name="Kandassamy Y."/>
            <person name="Chantal I."/>
            <person name="Bensaid A."/>
            <person name="Coissac E."/>
            <person name="Vachiery N."/>
            <person name="Demaille J."/>
            <person name="Martinez D."/>
        </authorList>
    </citation>
    <scope>NUCLEOTIDE SEQUENCE [LARGE SCALE GENOMIC DNA]</scope>
    <source>
        <strain>Welgevonden</strain>
    </source>
</reference>
<dbReference type="EMBL" id="CR767821">
    <property type="protein sequence ID" value="CAH58177.1"/>
    <property type="molecule type" value="Genomic_DNA"/>
</dbReference>
<dbReference type="EMBL" id="CR925678">
    <property type="protein sequence ID" value="CAI26965.1"/>
    <property type="molecule type" value="Genomic_DNA"/>
</dbReference>
<dbReference type="RefSeq" id="WP_011155130.1">
    <property type="nucleotide sequence ID" value="NC_005295.2"/>
</dbReference>
<dbReference type="SMR" id="Q5HB81"/>
<dbReference type="GeneID" id="33057648"/>
<dbReference type="KEGG" id="eru:Erum4490"/>
<dbReference type="KEGG" id="erw:ERWE_CDS_04710"/>
<dbReference type="eggNOG" id="COG0218">
    <property type="taxonomic scope" value="Bacteria"/>
</dbReference>
<dbReference type="HOGENOM" id="CLU_033732_2_0_5"/>
<dbReference type="Proteomes" id="UP000001021">
    <property type="component" value="Chromosome"/>
</dbReference>
<dbReference type="GO" id="GO:0005525">
    <property type="term" value="F:GTP binding"/>
    <property type="evidence" value="ECO:0007669"/>
    <property type="project" value="UniProtKB-UniRule"/>
</dbReference>
<dbReference type="GO" id="GO:0046872">
    <property type="term" value="F:metal ion binding"/>
    <property type="evidence" value="ECO:0007669"/>
    <property type="project" value="UniProtKB-KW"/>
</dbReference>
<dbReference type="GO" id="GO:0000917">
    <property type="term" value="P:division septum assembly"/>
    <property type="evidence" value="ECO:0007669"/>
    <property type="project" value="UniProtKB-KW"/>
</dbReference>
<dbReference type="CDD" id="cd01876">
    <property type="entry name" value="YihA_EngB"/>
    <property type="match status" value="1"/>
</dbReference>
<dbReference type="Gene3D" id="3.40.50.300">
    <property type="entry name" value="P-loop containing nucleotide triphosphate hydrolases"/>
    <property type="match status" value="1"/>
</dbReference>
<dbReference type="HAMAP" id="MF_00321">
    <property type="entry name" value="GTPase_EngB"/>
    <property type="match status" value="1"/>
</dbReference>
<dbReference type="InterPro" id="IPR030393">
    <property type="entry name" value="G_ENGB_dom"/>
</dbReference>
<dbReference type="InterPro" id="IPR006073">
    <property type="entry name" value="GTP-bd"/>
</dbReference>
<dbReference type="InterPro" id="IPR019987">
    <property type="entry name" value="GTP-bd_ribosome_bio_YsxC"/>
</dbReference>
<dbReference type="InterPro" id="IPR027417">
    <property type="entry name" value="P-loop_NTPase"/>
</dbReference>
<dbReference type="NCBIfam" id="TIGR03598">
    <property type="entry name" value="GTPase_YsxC"/>
    <property type="match status" value="1"/>
</dbReference>
<dbReference type="PANTHER" id="PTHR11649:SF13">
    <property type="entry name" value="ENGB-TYPE G DOMAIN-CONTAINING PROTEIN"/>
    <property type="match status" value="1"/>
</dbReference>
<dbReference type="PANTHER" id="PTHR11649">
    <property type="entry name" value="MSS1/TRME-RELATED GTP-BINDING PROTEIN"/>
    <property type="match status" value="1"/>
</dbReference>
<dbReference type="Pfam" id="PF01926">
    <property type="entry name" value="MMR_HSR1"/>
    <property type="match status" value="1"/>
</dbReference>
<dbReference type="SUPFAM" id="SSF52540">
    <property type="entry name" value="P-loop containing nucleoside triphosphate hydrolases"/>
    <property type="match status" value="1"/>
</dbReference>
<dbReference type="PROSITE" id="PS51706">
    <property type="entry name" value="G_ENGB"/>
    <property type="match status" value="1"/>
</dbReference>
<feature type="chain" id="PRO_0000266857" description="Probable GTP-binding protein EngB">
    <location>
        <begin position="1"/>
        <end position="200"/>
    </location>
</feature>
<feature type="domain" description="EngB-type G" evidence="1">
    <location>
        <begin position="26"/>
        <end position="200"/>
    </location>
</feature>
<feature type="binding site" evidence="1">
    <location>
        <begin position="34"/>
        <end position="41"/>
    </location>
    <ligand>
        <name>GTP</name>
        <dbReference type="ChEBI" id="CHEBI:37565"/>
    </ligand>
</feature>
<feature type="binding site" evidence="1">
    <location>
        <position position="41"/>
    </location>
    <ligand>
        <name>Mg(2+)</name>
        <dbReference type="ChEBI" id="CHEBI:18420"/>
    </ligand>
</feature>
<feature type="binding site" evidence="1">
    <location>
        <begin position="61"/>
        <end position="65"/>
    </location>
    <ligand>
        <name>GTP</name>
        <dbReference type="ChEBI" id="CHEBI:37565"/>
    </ligand>
</feature>
<feature type="binding site" evidence="1">
    <location>
        <position position="63"/>
    </location>
    <ligand>
        <name>Mg(2+)</name>
        <dbReference type="ChEBI" id="CHEBI:18420"/>
    </ligand>
</feature>
<feature type="binding site" evidence="1">
    <location>
        <begin position="80"/>
        <end position="83"/>
    </location>
    <ligand>
        <name>GTP</name>
        <dbReference type="ChEBI" id="CHEBI:37565"/>
    </ligand>
</feature>
<feature type="binding site" evidence="1">
    <location>
        <begin position="147"/>
        <end position="150"/>
    </location>
    <ligand>
        <name>GTP</name>
        <dbReference type="ChEBI" id="CHEBI:37565"/>
    </ligand>
</feature>
<feature type="binding site" evidence="1">
    <location>
        <begin position="179"/>
        <end position="181"/>
    </location>
    <ligand>
        <name>GTP</name>
        <dbReference type="ChEBI" id="CHEBI:37565"/>
    </ligand>
</feature>
<comment type="function">
    <text evidence="1">Necessary for normal cell division and for the maintenance of normal septation.</text>
</comment>
<comment type="cofactor">
    <cofactor evidence="1">
        <name>Mg(2+)</name>
        <dbReference type="ChEBI" id="CHEBI:18420"/>
    </cofactor>
</comment>
<comment type="similarity">
    <text evidence="1">Belongs to the TRAFAC class TrmE-Era-EngA-EngB-Septin-like GTPase superfamily. EngB GTPase family.</text>
</comment>
<keyword id="KW-0131">Cell cycle</keyword>
<keyword id="KW-0132">Cell division</keyword>
<keyword id="KW-0342">GTP-binding</keyword>
<keyword id="KW-0460">Magnesium</keyword>
<keyword id="KW-0479">Metal-binding</keyword>
<keyword id="KW-0547">Nucleotide-binding</keyword>
<keyword id="KW-0717">Septation</keyword>
<accession>Q5HB81</accession>
<accession>Q5FEK1</accession>
<gene>
    <name evidence="1" type="primary">engB</name>
    <name type="ordered locus">Erum4490</name>
    <name type="ordered locus">ERWE_CDS_04710</name>
</gene>
<organism>
    <name type="scientific">Ehrlichia ruminantium (strain Welgevonden)</name>
    <dbReference type="NCBI Taxonomy" id="254945"/>
    <lineage>
        <taxon>Bacteria</taxon>
        <taxon>Pseudomonadati</taxon>
        <taxon>Pseudomonadota</taxon>
        <taxon>Alphaproteobacteria</taxon>
        <taxon>Rickettsiales</taxon>
        <taxon>Anaplasmataceae</taxon>
        <taxon>Ehrlichia</taxon>
    </lineage>
</organism>
<evidence type="ECO:0000255" key="1">
    <source>
        <dbReference type="HAMAP-Rule" id="MF_00321"/>
    </source>
</evidence>
<name>ENGB_EHRRW</name>
<sequence>MKLKSIMSQCQFIIGATSIKSLPDFSIPEVALAGRSNVGKSSLINAITNNRKNARISSKPGCTRQINFYLINKGLMVLVDLPGYGYSKADRATVNSYICLMEYYLLNRKNLSKVVLLIDAKVGFKEIDLDFIRWLEVHQILYQLVLTKIDRVQSNVLDVIVSDIQNFNLNFIIYPIINVSSKCKQGIEELIYEIAQCIKK</sequence>
<proteinExistence type="inferred from homology"/>